<organism>
    <name type="scientific">Bacillus cereus (strain 03BB102)</name>
    <dbReference type="NCBI Taxonomy" id="572264"/>
    <lineage>
        <taxon>Bacteria</taxon>
        <taxon>Bacillati</taxon>
        <taxon>Bacillota</taxon>
        <taxon>Bacilli</taxon>
        <taxon>Bacillales</taxon>
        <taxon>Bacillaceae</taxon>
        <taxon>Bacillus</taxon>
        <taxon>Bacillus cereus group</taxon>
    </lineage>
</organism>
<feature type="chain" id="PRO_1000189490" description="Cell cycle protein GpsB">
    <location>
        <begin position="1"/>
        <end position="112"/>
    </location>
</feature>
<feature type="coiled-coil region" evidence="1">
    <location>
        <begin position="38"/>
        <end position="72"/>
    </location>
</feature>
<name>GPSB_BACC3</name>
<sequence length="112" mass="13119">MISDKIKLTAKDILEKEFKTGMRGYQQEEVDKFLDMIIKDYEAFHKEFEQLKQQNARLKRELEEQKLAATQVPQQPVVQTPVAQPVYNNTNTDILKRLSNLEKAVFGSKLYE</sequence>
<comment type="function">
    <text evidence="1">Divisome component that associates with the complex late in its assembly, after the Z-ring is formed, and is dependent on DivIC and PBP2B for its recruitment to the divisome. Together with EzrA, is a key component of the system that regulates PBP1 localization during cell cycle progression. Its main role could be the removal of PBP1 from the cell pole after pole maturation is completed. Also contributes to the recruitment of PBP1 to the division complex. Not essential for septum formation.</text>
</comment>
<comment type="subunit">
    <text evidence="1">Forms polymers through the coiled coil domains. Interacts with PBP1, MreC and EzrA.</text>
</comment>
<comment type="subcellular location">
    <subcellularLocation>
        <location evidence="1">Cytoplasm</location>
    </subcellularLocation>
    <text evidence="1">Shuttles between the lateral wall and the division site in a cell cycle-dependent manner.</text>
</comment>
<comment type="similarity">
    <text evidence="1">Belongs to the GpsB family.</text>
</comment>
<protein>
    <recommendedName>
        <fullName evidence="1">Cell cycle protein GpsB</fullName>
    </recommendedName>
    <alternativeName>
        <fullName evidence="1">Guiding PBP1-shuttling protein</fullName>
    </alternativeName>
</protein>
<reference key="1">
    <citation type="submission" date="2009-02" db="EMBL/GenBank/DDBJ databases">
        <title>Genome sequence of Bacillus cereus 03BB102.</title>
        <authorList>
            <person name="Dodson R.J."/>
            <person name="Jackson P."/>
            <person name="Munk A.C."/>
            <person name="Brettin T."/>
            <person name="Bruce D."/>
            <person name="Detter C."/>
            <person name="Tapia R."/>
            <person name="Han C."/>
            <person name="Sutton G."/>
            <person name="Sims D."/>
        </authorList>
    </citation>
    <scope>NUCLEOTIDE SEQUENCE [LARGE SCALE GENOMIC DNA]</scope>
    <source>
        <strain>03BB102</strain>
    </source>
</reference>
<keyword id="KW-0131">Cell cycle</keyword>
<keyword id="KW-0132">Cell division</keyword>
<keyword id="KW-0133">Cell shape</keyword>
<keyword id="KW-0175">Coiled coil</keyword>
<keyword id="KW-0963">Cytoplasm</keyword>
<evidence type="ECO:0000255" key="1">
    <source>
        <dbReference type="HAMAP-Rule" id="MF_02011"/>
    </source>
</evidence>
<proteinExistence type="inferred from homology"/>
<accession>C1ENJ5</accession>
<gene>
    <name evidence="1" type="primary">gpsB</name>
    <name type="ordered locus">BCA_1618</name>
</gene>
<dbReference type="EMBL" id="CP001407">
    <property type="protein sequence ID" value="ACO28141.1"/>
    <property type="molecule type" value="Genomic_DNA"/>
</dbReference>
<dbReference type="RefSeq" id="WP_000622430.1">
    <property type="nucleotide sequence ID" value="NZ_CP009318.1"/>
</dbReference>
<dbReference type="SMR" id="C1ENJ5"/>
<dbReference type="GeneID" id="93009481"/>
<dbReference type="KEGG" id="bcx:BCA_1618"/>
<dbReference type="PATRIC" id="fig|572264.18.peg.1566"/>
<dbReference type="Proteomes" id="UP000002210">
    <property type="component" value="Chromosome"/>
</dbReference>
<dbReference type="GO" id="GO:0005737">
    <property type="term" value="C:cytoplasm"/>
    <property type="evidence" value="ECO:0007669"/>
    <property type="project" value="UniProtKB-SubCell"/>
</dbReference>
<dbReference type="GO" id="GO:0051301">
    <property type="term" value="P:cell division"/>
    <property type="evidence" value="ECO:0007669"/>
    <property type="project" value="UniProtKB-UniRule"/>
</dbReference>
<dbReference type="GO" id="GO:0008360">
    <property type="term" value="P:regulation of cell shape"/>
    <property type="evidence" value="ECO:0007669"/>
    <property type="project" value="UniProtKB-UniRule"/>
</dbReference>
<dbReference type="Gene3D" id="6.10.250.660">
    <property type="match status" value="1"/>
</dbReference>
<dbReference type="HAMAP" id="MF_02011">
    <property type="entry name" value="GpsB"/>
    <property type="match status" value="1"/>
</dbReference>
<dbReference type="InterPro" id="IPR011229">
    <property type="entry name" value="Cell_cycle_GpsB"/>
</dbReference>
<dbReference type="InterPro" id="IPR019933">
    <property type="entry name" value="DivIVA_domain"/>
</dbReference>
<dbReference type="InterPro" id="IPR007793">
    <property type="entry name" value="DivIVA_fam"/>
</dbReference>
<dbReference type="NCBIfam" id="TIGR03544">
    <property type="entry name" value="DivI1A_domain"/>
    <property type="match status" value="1"/>
</dbReference>
<dbReference type="NCBIfam" id="NF010725">
    <property type="entry name" value="PRK14127.1"/>
    <property type="match status" value="1"/>
</dbReference>
<dbReference type="PANTHER" id="PTHR35794:SF1">
    <property type="entry name" value="CELL CYCLE PROTEIN GPSB"/>
    <property type="match status" value="1"/>
</dbReference>
<dbReference type="PANTHER" id="PTHR35794">
    <property type="entry name" value="CELL DIVISION PROTEIN DIVIVA"/>
    <property type="match status" value="1"/>
</dbReference>
<dbReference type="Pfam" id="PF05103">
    <property type="entry name" value="DivIVA"/>
    <property type="match status" value="1"/>
</dbReference>
<dbReference type="PIRSF" id="PIRSF029938">
    <property type="entry name" value="UCP029938"/>
    <property type="match status" value="1"/>
</dbReference>